<dbReference type="EMBL" id="AE005673">
    <property type="protein sequence ID" value="AAK23233.1"/>
    <property type="molecule type" value="Genomic_DNA"/>
</dbReference>
<dbReference type="PIR" id="E87404">
    <property type="entry name" value="E87404"/>
</dbReference>
<dbReference type="RefSeq" id="NP_420065.1">
    <property type="nucleotide sequence ID" value="NC_002696.2"/>
</dbReference>
<dbReference type="RefSeq" id="WP_010919131.1">
    <property type="nucleotide sequence ID" value="NC_002696.2"/>
</dbReference>
<dbReference type="SMR" id="Q9A8U9"/>
<dbReference type="STRING" id="190650.CC_1252"/>
<dbReference type="EnsemblBacteria" id="AAK23233">
    <property type="protein sequence ID" value="AAK23233"/>
    <property type="gene ID" value="CC_1252"/>
</dbReference>
<dbReference type="KEGG" id="ccr:CC_1252"/>
<dbReference type="PATRIC" id="fig|190650.5.peg.1277"/>
<dbReference type="eggNOG" id="COG0185">
    <property type="taxonomic scope" value="Bacteria"/>
</dbReference>
<dbReference type="HOGENOM" id="CLU_144911_0_1_5"/>
<dbReference type="BioCyc" id="CAULO:CC1252-MONOMER"/>
<dbReference type="Proteomes" id="UP000001816">
    <property type="component" value="Chromosome"/>
</dbReference>
<dbReference type="GO" id="GO:0005737">
    <property type="term" value="C:cytoplasm"/>
    <property type="evidence" value="ECO:0007669"/>
    <property type="project" value="UniProtKB-ARBA"/>
</dbReference>
<dbReference type="GO" id="GO:0015935">
    <property type="term" value="C:small ribosomal subunit"/>
    <property type="evidence" value="ECO:0007669"/>
    <property type="project" value="InterPro"/>
</dbReference>
<dbReference type="GO" id="GO:0019843">
    <property type="term" value="F:rRNA binding"/>
    <property type="evidence" value="ECO:0007669"/>
    <property type="project" value="UniProtKB-UniRule"/>
</dbReference>
<dbReference type="GO" id="GO:0003735">
    <property type="term" value="F:structural constituent of ribosome"/>
    <property type="evidence" value="ECO:0007669"/>
    <property type="project" value="InterPro"/>
</dbReference>
<dbReference type="GO" id="GO:0000028">
    <property type="term" value="P:ribosomal small subunit assembly"/>
    <property type="evidence" value="ECO:0007669"/>
    <property type="project" value="TreeGrafter"/>
</dbReference>
<dbReference type="GO" id="GO:0006412">
    <property type="term" value="P:translation"/>
    <property type="evidence" value="ECO:0007669"/>
    <property type="project" value="UniProtKB-UniRule"/>
</dbReference>
<dbReference type="FunFam" id="3.30.860.10:FF:000001">
    <property type="entry name" value="30S ribosomal protein S19"/>
    <property type="match status" value="1"/>
</dbReference>
<dbReference type="Gene3D" id="3.30.860.10">
    <property type="entry name" value="30s Ribosomal Protein S19, Chain A"/>
    <property type="match status" value="1"/>
</dbReference>
<dbReference type="HAMAP" id="MF_00531">
    <property type="entry name" value="Ribosomal_uS19"/>
    <property type="match status" value="1"/>
</dbReference>
<dbReference type="InterPro" id="IPR002222">
    <property type="entry name" value="Ribosomal_uS19"/>
</dbReference>
<dbReference type="InterPro" id="IPR005732">
    <property type="entry name" value="Ribosomal_uS19_bac-type"/>
</dbReference>
<dbReference type="InterPro" id="IPR020934">
    <property type="entry name" value="Ribosomal_uS19_CS"/>
</dbReference>
<dbReference type="InterPro" id="IPR023575">
    <property type="entry name" value="Ribosomal_uS19_SF"/>
</dbReference>
<dbReference type="NCBIfam" id="TIGR01050">
    <property type="entry name" value="rpsS_bact"/>
    <property type="match status" value="1"/>
</dbReference>
<dbReference type="PANTHER" id="PTHR11880">
    <property type="entry name" value="RIBOSOMAL PROTEIN S19P FAMILY MEMBER"/>
    <property type="match status" value="1"/>
</dbReference>
<dbReference type="PANTHER" id="PTHR11880:SF8">
    <property type="entry name" value="SMALL RIBOSOMAL SUBUNIT PROTEIN US19M"/>
    <property type="match status" value="1"/>
</dbReference>
<dbReference type="Pfam" id="PF00203">
    <property type="entry name" value="Ribosomal_S19"/>
    <property type="match status" value="1"/>
</dbReference>
<dbReference type="PIRSF" id="PIRSF002144">
    <property type="entry name" value="Ribosomal_S19"/>
    <property type="match status" value="1"/>
</dbReference>
<dbReference type="PRINTS" id="PR00975">
    <property type="entry name" value="RIBOSOMALS19"/>
</dbReference>
<dbReference type="SUPFAM" id="SSF54570">
    <property type="entry name" value="Ribosomal protein S19"/>
    <property type="match status" value="1"/>
</dbReference>
<dbReference type="PROSITE" id="PS00323">
    <property type="entry name" value="RIBOSOMAL_S19"/>
    <property type="match status" value="1"/>
</dbReference>
<proteinExistence type="inferred from homology"/>
<comment type="function">
    <text evidence="1">Protein S19 forms a complex with S13 that binds strongly to the 16S ribosomal RNA.</text>
</comment>
<comment type="similarity">
    <text evidence="1">Belongs to the universal ribosomal protein uS19 family.</text>
</comment>
<organism>
    <name type="scientific">Caulobacter vibrioides (strain ATCC 19089 / CIP 103742 / CB 15)</name>
    <name type="common">Caulobacter crescentus</name>
    <dbReference type="NCBI Taxonomy" id="190650"/>
    <lineage>
        <taxon>Bacteria</taxon>
        <taxon>Pseudomonadati</taxon>
        <taxon>Pseudomonadota</taxon>
        <taxon>Alphaproteobacteria</taxon>
        <taxon>Caulobacterales</taxon>
        <taxon>Caulobacteraceae</taxon>
        <taxon>Caulobacter</taxon>
    </lineage>
</organism>
<name>RS19_CAUVC</name>
<keyword id="KW-1185">Reference proteome</keyword>
<keyword id="KW-0687">Ribonucleoprotein</keyword>
<keyword id="KW-0689">Ribosomal protein</keyword>
<keyword id="KW-0694">RNA-binding</keyword>
<keyword id="KW-0699">rRNA-binding</keyword>
<protein>
    <recommendedName>
        <fullName evidence="1">Small ribosomal subunit protein uS19</fullName>
    </recommendedName>
    <alternativeName>
        <fullName evidence="2">30S ribosomal protein S19</fullName>
    </alternativeName>
</protein>
<accession>Q9A8U9</accession>
<feature type="chain" id="PRO_0000129801" description="Small ribosomal subunit protein uS19">
    <location>
        <begin position="1"/>
        <end position="92"/>
    </location>
</feature>
<sequence length="92" mass="10256">MTRSVWKGPFVDGYLLKKADAALSSGRKDVIKTWSRRSTIMPQFVGLTFGVHNGHKHVPVLVSEDMVGMKFGEFAPTRNFPGHAADKKAKRK</sequence>
<gene>
    <name evidence="1" type="primary">rpsS</name>
    <name type="ordered locus">CC_1252</name>
</gene>
<reference key="1">
    <citation type="journal article" date="2001" name="Proc. Natl. Acad. Sci. U.S.A.">
        <title>Complete genome sequence of Caulobacter crescentus.</title>
        <authorList>
            <person name="Nierman W.C."/>
            <person name="Feldblyum T.V."/>
            <person name="Laub M.T."/>
            <person name="Paulsen I.T."/>
            <person name="Nelson K.E."/>
            <person name="Eisen J.A."/>
            <person name="Heidelberg J.F."/>
            <person name="Alley M.R.K."/>
            <person name="Ohta N."/>
            <person name="Maddock J.R."/>
            <person name="Potocka I."/>
            <person name="Nelson W.C."/>
            <person name="Newton A."/>
            <person name="Stephens C."/>
            <person name="Phadke N.D."/>
            <person name="Ely B."/>
            <person name="DeBoy R.T."/>
            <person name="Dodson R.J."/>
            <person name="Durkin A.S."/>
            <person name="Gwinn M.L."/>
            <person name="Haft D.H."/>
            <person name="Kolonay J.F."/>
            <person name="Smit J."/>
            <person name="Craven M.B."/>
            <person name="Khouri H.M."/>
            <person name="Shetty J."/>
            <person name="Berry K.J."/>
            <person name="Utterback T.R."/>
            <person name="Tran K."/>
            <person name="Wolf A.M."/>
            <person name="Vamathevan J.J."/>
            <person name="Ermolaeva M.D."/>
            <person name="White O."/>
            <person name="Salzberg S.L."/>
            <person name="Venter J.C."/>
            <person name="Shapiro L."/>
            <person name="Fraser C.M."/>
        </authorList>
    </citation>
    <scope>NUCLEOTIDE SEQUENCE [LARGE SCALE GENOMIC DNA]</scope>
    <source>
        <strain>ATCC 19089 / CIP 103742 / CB 15</strain>
    </source>
</reference>
<evidence type="ECO:0000255" key="1">
    <source>
        <dbReference type="HAMAP-Rule" id="MF_00531"/>
    </source>
</evidence>
<evidence type="ECO:0000305" key="2"/>